<evidence type="ECO:0000255" key="1">
    <source>
        <dbReference type="HAMAP-Rule" id="MF_01341"/>
    </source>
</evidence>
<evidence type="ECO:0000256" key="2">
    <source>
        <dbReference type="SAM" id="MobiDB-lite"/>
    </source>
</evidence>
<evidence type="ECO:0000305" key="3"/>
<sequence length="146" mass="15659">MNLTDLRPADGSKQSGNFRRGRGHGSGNGKTAGKGHKGQKARSGAPRVGFEGGQMPLYRRLPKRGFKNRNTKEIISVNVSMLNRFEDGADVTLESLREIGIISNPKDGVKILGNGELTKKLNVKVSAFSESAIEKIKALGGNAEVI</sequence>
<name>RL15_LACP7</name>
<keyword id="KW-1185">Reference proteome</keyword>
<keyword id="KW-0687">Ribonucleoprotein</keyword>
<keyword id="KW-0689">Ribosomal protein</keyword>
<keyword id="KW-0694">RNA-binding</keyword>
<keyword id="KW-0699">rRNA-binding</keyword>
<feature type="chain" id="PRO_1000086707" description="Large ribosomal subunit protein uL15">
    <location>
        <begin position="1"/>
        <end position="146"/>
    </location>
</feature>
<feature type="region of interest" description="Disordered" evidence="2">
    <location>
        <begin position="1"/>
        <end position="54"/>
    </location>
</feature>
<proteinExistence type="inferred from homology"/>
<reference key="1">
    <citation type="submission" date="2007-11" db="EMBL/GenBank/DDBJ databases">
        <title>Complete genome sequence of Clostridium phytofermentans ISDg.</title>
        <authorList>
            <person name="Leschine S.B."/>
            <person name="Warnick T.A."/>
            <person name="Blanchard J.L."/>
            <person name="Schnell D.J."/>
            <person name="Petit E.L."/>
            <person name="LaTouf W.G."/>
            <person name="Copeland A."/>
            <person name="Lucas S."/>
            <person name="Lapidus A."/>
            <person name="Barry K."/>
            <person name="Glavina del Rio T."/>
            <person name="Dalin E."/>
            <person name="Tice H."/>
            <person name="Pitluck S."/>
            <person name="Kiss H."/>
            <person name="Brettin T."/>
            <person name="Bruce D."/>
            <person name="Detter J.C."/>
            <person name="Han C."/>
            <person name="Kuske C."/>
            <person name="Schmutz J."/>
            <person name="Larimer F."/>
            <person name="Land M."/>
            <person name="Hauser L."/>
            <person name="Kyrpides N."/>
            <person name="Kim E.A."/>
            <person name="Richardson P."/>
        </authorList>
    </citation>
    <scope>NUCLEOTIDE SEQUENCE [LARGE SCALE GENOMIC DNA]</scope>
    <source>
        <strain>ATCC 700394 / DSM 18823 / ISDg</strain>
    </source>
</reference>
<gene>
    <name evidence="1" type="primary">rplO</name>
    <name type="ordered locus">Cphy_3648</name>
</gene>
<accession>A9KJH5</accession>
<dbReference type="EMBL" id="CP000885">
    <property type="protein sequence ID" value="ABX43995.1"/>
    <property type="molecule type" value="Genomic_DNA"/>
</dbReference>
<dbReference type="RefSeq" id="WP_012201643.1">
    <property type="nucleotide sequence ID" value="NC_010001.1"/>
</dbReference>
<dbReference type="SMR" id="A9KJH5"/>
<dbReference type="STRING" id="357809.Cphy_3648"/>
<dbReference type="KEGG" id="cpy:Cphy_3648"/>
<dbReference type="eggNOG" id="COG0200">
    <property type="taxonomic scope" value="Bacteria"/>
</dbReference>
<dbReference type="HOGENOM" id="CLU_055188_4_2_9"/>
<dbReference type="OrthoDB" id="9810293at2"/>
<dbReference type="Proteomes" id="UP000000370">
    <property type="component" value="Chromosome"/>
</dbReference>
<dbReference type="GO" id="GO:0022625">
    <property type="term" value="C:cytosolic large ribosomal subunit"/>
    <property type="evidence" value="ECO:0007669"/>
    <property type="project" value="TreeGrafter"/>
</dbReference>
<dbReference type="GO" id="GO:0019843">
    <property type="term" value="F:rRNA binding"/>
    <property type="evidence" value="ECO:0007669"/>
    <property type="project" value="UniProtKB-UniRule"/>
</dbReference>
<dbReference type="GO" id="GO:0003735">
    <property type="term" value="F:structural constituent of ribosome"/>
    <property type="evidence" value="ECO:0007669"/>
    <property type="project" value="InterPro"/>
</dbReference>
<dbReference type="GO" id="GO:0006412">
    <property type="term" value="P:translation"/>
    <property type="evidence" value="ECO:0007669"/>
    <property type="project" value="UniProtKB-UniRule"/>
</dbReference>
<dbReference type="Gene3D" id="3.100.10.10">
    <property type="match status" value="1"/>
</dbReference>
<dbReference type="HAMAP" id="MF_01341">
    <property type="entry name" value="Ribosomal_uL15"/>
    <property type="match status" value="1"/>
</dbReference>
<dbReference type="InterPro" id="IPR030878">
    <property type="entry name" value="Ribosomal_uL15"/>
</dbReference>
<dbReference type="InterPro" id="IPR021131">
    <property type="entry name" value="Ribosomal_uL15/eL18"/>
</dbReference>
<dbReference type="InterPro" id="IPR036227">
    <property type="entry name" value="Ribosomal_uL15/eL18_sf"/>
</dbReference>
<dbReference type="InterPro" id="IPR005749">
    <property type="entry name" value="Ribosomal_uL15_bac-type"/>
</dbReference>
<dbReference type="InterPro" id="IPR001196">
    <property type="entry name" value="Ribosomal_uL15_CS"/>
</dbReference>
<dbReference type="NCBIfam" id="TIGR01071">
    <property type="entry name" value="rplO_bact"/>
    <property type="match status" value="1"/>
</dbReference>
<dbReference type="PANTHER" id="PTHR12934">
    <property type="entry name" value="50S RIBOSOMAL PROTEIN L15"/>
    <property type="match status" value="1"/>
</dbReference>
<dbReference type="PANTHER" id="PTHR12934:SF11">
    <property type="entry name" value="LARGE RIBOSOMAL SUBUNIT PROTEIN UL15M"/>
    <property type="match status" value="1"/>
</dbReference>
<dbReference type="Pfam" id="PF00828">
    <property type="entry name" value="Ribosomal_L27A"/>
    <property type="match status" value="1"/>
</dbReference>
<dbReference type="SUPFAM" id="SSF52080">
    <property type="entry name" value="Ribosomal proteins L15p and L18e"/>
    <property type="match status" value="1"/>
</dbReference>
<dbReference type="PROSITE" id="PS00475">
    <property type="entry name" value="RIBOSOMAL_L15"/>
    <property type="match status" value="1"/>
</dbReference>
<protein>
    <recommendedName>
        <fullName evidence="1">Large ribosomal subunit protein uL15</fullName>
    </recommendedName>
    <alternativeName>
        <fullName evidence="3">50S ribosomal protein L15</fullName>
    </alternativeName>
</protein>
<comment type="function">
    <text evidence="1">Binds to the 23S rRNA.</text>
</comment>
<comment type="subunit">
    <text evidence="1">Part of the 50S ribosomal subunit.</text>
</comment>
<comment type="similarity">
    <text evidence="1">Belongs to the universal ribosomal protein uL15 family.</text>
</comment>
<organism>
    <name type="scientific">Lachnoclostridium phytofermentans (strain ATCC 700394 / DSM 18823 / ISDg)</name>
    <name type="common">Clostridium phytofermentans</name>
    <dbReference type="NCBI Taxonomy" id="357809"/>
    <lineage>
        <taxon>Bacteria</taxon>
        <taxon>Bacillati</taxon>
        <taxon>Bacillota</taxon>
        <taxon>Clostridia</taxon>
        <taxon>Lachnospirales</taxon>
        <taxon>Lachnospiraceae</taxon>
    </lineage>
</organism>